<feature type="chain" id="PRO_0000180641" description="Glucose-6-phosphate isomerase">
    <location>
        <begin position="1"/>
        <end position="549"/>
    </location>
</feature>
<feature type="active site" description="Proton donor" evidence="1">
    <location>
        <position position="355"/>
    </location>
</feature>
<feature type="active site" evidence="1">
    <location>
        <position position="386"/>
    </location>
</feature>
<feature type="active site" evidence="1">
    <location>
        <position position="514"/>
    </location>
</feature>
<feature type="modified residue" description="N6-acetyllysine" evidence="1 4">
    <location>
        <position position="80"/>
    </location>
</feature>
<feature type="modified residue" description="N6-acetyllysine" evidence="1 4">
    <location>
        <position position="228"/>
    </location>
</feature>
<feature type="modified residue" description="N6-acetyllysine" evidence="1 4">
    <location>
        <position position="234"/>
    </location>
</feature>
<feature type="sequence conflict" description="In Ref. 1 and 2." evidence="8" ref="1 2">
    <original>L</original>
    <variation>V</variation>
    <location>
        <position position="317"/>
    </location>
</feature>
<feature type="helix" evidence="9">
    <location>
        <begin position="6"/>
        <end position="8"/>
    </location>
</feature>
<feature type="helix" evidence="9">
    <location>
        <begin position="10"/>
        <end position="22"/>
    </location>
</feature>
<feature type="helix" evidence="9">
    <location>
        <begin position="27"/>
        <end position="33"/>
    </location>
</feature>
<feature type="helix" evidence="9">
    <location>
        <begin position="37"/>
        <end position="40"/>
    </location>
</feature>
<feature type="strand" evidence="9">
    <location>
        <begin position="41"/>
        <end position="45"/>
    </location>
</feature>
<feature type="turn" evidence="9">
    <location>
        <begin position="46"/>
        <end position="48"/>
    </location>
</feature>
<feature type="strand" evidence="9">
    <location>
        <begin position="49"/>
        <end position="52"/>
    </location>
</feature>
<feature type="strand" evidence="9">
    <location>
        <begin position="55"/>
        <end position="57"/>
    </location>
</feature>
<feature type="helix" evidence="9">
    <location>
        <begin position="60"/>
        <end position="72"/>
    </location>
</feature>
<feature type="helix" evidence="9">
    <location>
        <begin position="75"/>
        <end position="83"/>
    </location>
</feature>
<feature type="turn" evidence="9">
    <location>
        <begin position="90"/>
        <end position="93"/>
    </location>
</feature>
<feature type="helix" evidence="9">
    <location>
        <begin position="98"/>
        <end position="101"/>
    </location>
</feature>
<feature type="strand" evidence="9">
    <location>
        <begin position="114"/>
        <end position="116"/>
    </location>
</feature>
<feature type="helix" evidence="9">
    <location>
        <begin position="117"/>
        <end position="135"/>
    </location>
</feature>
<feature type="strand" evidence="9">
    <location>
        <begin position="149"/>
        <end position="153"/>
    </location>
</feature>
<feature type="helix" evidence="9">
    <location>
        <begin position="156"/>
        <end position="158"/>
    </location>
</feature>
<feature type="helix" evidence="9">
    <location>
        <begin position="160"/>
        <end position="168"/>
    </location>
</feature>
<feature type="helix" evidence="9">
    <location>
        <begin position="170"/>
        <end position="172"/>
    </location>
</feature>
<feature type="strand" evidence="9">
    <location>
        <begin position="177"/>
        <end position="181"/>
    </location>
</feature>
<feature type="helix" evidence="9">
    <location>
        <begin position="186"/>
        <end position="193"/>
    </location>
</feature>
<feature type="helix" evidence="9">
    <location>
        <begin position="198"/>
        <end position="200"/>
    </location>
</feature>
<feature type="strand" evidence="9">
    <location>
        <begin position="201"/>
        <end position="206"/>
    </location>
</feature>
<feature type="strand" evidence="9">
    <location>
        <begin position="208"/>
        <end position="210"/>
    </location>
</feature>
<feature type="helix" evidence="9">
    <location>
        <begin position="213"/>
        <end position="230"/>
    </location>
</feature>
<feature type="helix" evidence="9">
    <location>
        <begin position="233"/>
        <end position="238"/>
    </location>
</feature>
<feature type="strand" evidence="9">
    <location>
        <begin position="240"/>
        <end position="244"/>
    </location>
</feature>
<feature type="helix" evidence="9">
    <location>
        <begin position="247"/>
        <end position="250"/>
    </location>
</feature>
<feature type="helix" evidence="9">
    <location>
        <begin position="257"/>
        <end position="259"/>
    </location>
</feature>
<feature type="strand" evidence="9">
    <location>
        <begin position="260"/>
        <end position="262"/>
    </location>
</feature>
<feature type="helix" evidence="9">
    <location>
        <begin position="269"/>
        <end position="271"/>
    </location>
</feature>
<feature type="helix" evidence="9">
    <location>
        <begin position="276"/>
        <end position="278"/>
    </location>
</feature>
<feature type="helix" evidence="9">
    <location>
        <begin position="279"/>
        <end position="285"/>
    </location>
</feature>
<feature type="helix" evidence="9">
    <location>
        <begin position="287"/>
        <end position="306"/>
    </location>
</feature>
<feature type="helix" evidence="9">
    <location>
        <begin position="309"/>
        <end position="311"/>
    </location>
</feature>
<feature type="helix" evidence="9">
    <location>
        <begin position="313"/>
        <end position="326"/>
    </location>
</feature>
<feature type="strand" evidence="9">
    <location>
        <begin position="332"/>
        <end position="338"/>
    </location>
</feature>
<feature type="helix" evidence="9">
    <location>
        <begin position="340"/>
        <end position="342"/>
    </location>
</feature>
<feature type="helix" evidence="9">
    <location>
        <begin position="345"/>
        <end position="357"/>
    </location>
</feature>
<feature type="strand" evidence="9">
    <location>
        <begin position="375"/>
        <end position="377"/>
    </location>
</feature>
<feature type="turn" evidence="9">
    <location>
        <begin position="381"/>
        <end position="384"/>
    </location>
</feature>
<feature type="helix" evidence="9">
    <location>
        <begin position="385"/>
        <end position="394"/>
    </location>
</feature>
<feature type="strand" evidence="9">
    <location>
        <begin position="395"/>
        <end position="397"/>
    </location>
</feature>
<feature type="strand" evidence="9">
    <location>
        <begin position="401"/>
        <end position="408"/>
    </location>
</feature>
<feature type="helix" evidence="9">
    <location>
        <begin position="416"/>
        <end position="433"/>
    </location>
</feature>
<feature type="helix" evidence="9">
    <location>
        <begin position="437"/>
        <end position="446"/>
    </location>
</feature>
<feature type="helix" evidence="9">
    <location>
        <begin position="451"/>
        <end position="453"/>
    </location>
</feature>
<feature type="turn" evidence="9">
    <location>
        <begin position="455"/>
        <end position="457"/>
    </location>
</feature>
<feature type="helix" evidence="9">
    <location>
        <begin position="458"/>
        <end position="461"/>
    </location>
</feature>
<feature type="strand" evidence="9">
    <location>
        <begin position="469"/>
        <end position="476"/>
    </location>
</feature>
<feature type="helix" evidence="9">
    <location>
        <begin position="479"/>
        <end position="499"/>
    </location>
</feature>
<feature type="helix" evidence="9">
    <location>
        <begin position="508"/>
        <end position="510"/>
    </location>
</feature>
<feature type="helix" evidence="9">
    <location>
        <begin position="511"/>
        <end position="523"/>
    </location>
</feature>
<feature type="helix" evidence="9">
    <location>
        <begin position="535"/>
        <end position="547"/>
    </location>
</feature>
<dbReference type="EC" id="5.3.1.9" evidence="1"/>
<dbReference type="EMBL" id="X15196">
    <property type="protein sequence ID" value="CAA33268.1"/>
    <property type="molecule type" value="Genomic_DNA"/>
</dbReference>
<dbReference type="EMBL" id="U00006">
    <property type="protein sequence ID" value="AAC43119.1"/>
    <property type="molecule type" value="Genomic_DNA"/>
</dbReference>
<dbReference type="EMBL" id="U00096">
    <property type="protein sequence ID" value="AAC76995.1"/>
    <property type="molecule type" value="Genomic_DNA"/>
</dbReference>
<dbReference type="EMBL" id="AP009048">
    <property type="protein sequence ID" value="BAE78027.1"/>
    <property type="molecule type" value="Genomic_DNA"/>
</dbReference>
<dbReference type="PIR" id="H65209">
    <property type="entry name" value="NUEC"/>
</dbReference>
<dbReference type="RefSeq" id="NP_418449.1">
    <property type="nucleotide sequence ID" value="NC_000913.3"/>
</dbReference>
<dbReference type="RefSeq" id="WP_000789986.1">
    <property type="nucleotide sequence ID" value="NZ_SSZK01000049.1"/>
</dbReference>
<dbReference type="PDB" id="3NBU">
    <property type="method" value="X-ray"/>
    <property type="resolution" value="2.05 A"/>
    <property type="chains" value="A/B/C/D/E/F=1-549"/>
</dbReference>
<dbReference type="PDBsum" id="3NBU"/>
<dbReference type="SMR" id="P0A6T1"/>
<dbReference type="BioGRID" id="4261959">
    <property type="interactions" value="33"/>
</dbReference>
<dbReference type="BioGRID" id="852829">
    <property type="interactions" value="1"/>
</dbReference>
<dbReference type="DIP" id="DIP-35887N"/>
<dbReference type="FunCoup" id="P0A6T1">
    <property type="interactions" value="816"/>
</dbReference>
<dbReference type="IntAct" id="P0A6T1">
    <property type="interactions" value="7"/>
</dbReference>
<dbReference type="STRING" id="511145.b4025"/>
<dbReference type="iPTMnet" id="P0A6T1"/>
<dbReference type="jPOST" id="P0A6T1"/>
<dbReference type="PaxDb" id="511145-b4025"/>
<dbReference type="EnsemblBacteria" id="AAC76995">
    <property type="protein sequence ID" value="AAC76995"/>
    <property type="gene ID" value="b4025"/>
</dbReference>
<dbReference type="GeneID" id="93777863"/>
<dbReference type="GeneID" id="948535"/>
<dbReference type="KEGG" id="ecj:JW3985"/>
<dbReference type="KEGG" id="eco:b4025"/>
<dbReference type="KEGG" id="ecoc:C3026_21740"/>
<dbReference type="PATRIC" id="fig|511145.12.peg.4138"/>
<dbReference type="EchoBASE" id="EB0696"/>
<dbReference type="eggNOG" id="COG0166">
    <property type="taxonomic scope" value="Bacteria"/>
</dbReference>
<dbReference type="HOGENOM" id="CLU_017947_3_1_6"/>
<dbReference type="InParanoid" id="P0A6T1"/>
<dbReference type="OMA" id="DWYRQLW"/>
<dbReference type="OrthoDB" id="140919at2"/>
<dbReference type="PhylomeDB" id="P0A6T1"/>
<dbReference type="BioCyc" id="EcoCyc:PGLUCISOM"/>
<dbReference type="BioCyc" id="MetaCyc:PGLUCISOM"/>
<dbReference type="SABIO-RK" id="P0A6T1"/>
<dbReference type="UniPathway" id="UPA00109">
    <property type="reaction ID" value="UER00181"/>
</dbReference>
<dbReference type="UniPathway" id="UPA00138"/>
<dbReference type="EvolutionaryTrace" id="P0A6T1"/>
<dbReference type="PRO" id="PR:P0A6T1"/>
<dbReference type="Proteomes" id="UP000000625">
    <property type="component" value="Chromosome"/>
</dbReference>
<dbReference type="GO" id="GO:0005829">
    <property type="term" value="C:cytosol"/>
    <property type="evidence" value="ECO:0000314"/>
    <property type="project" value="EcoCyc"/>
</dbReference>
<dbReference type="GO" id="GO:0097367">
    <property type="term" value="F:carbohydrate derivative binding"/>
    <property type="evidence" value="ECO:0007669"/>
    <property type="project" value="InterPro"/>
</dbReference>
<dbReference type="GO" id="GO:0004347">
    <property type="term" value="F:glucose-6-phosphate isomerase activity"/>
    <property type="evidence" value="ECO:0000314"/>
    <property type="project" value="EcoCyc"/>
</dbReference>
<dbReference type="GO" id="GO:0042802">
    <property type="term" value="F:identical protein binding"/>
    <property type="evidence" value="ECO:0000353"/>
    <property type="project" value="IntAct"/>
</dbReference>
<dbReference type="GO" id="GO:0048029">
    <property type="term" value="F:monosaccharide binding"/>
    <property type="evidence" value="ECO:0000318"/>
    <property type="project" value="GO_Central"/>
</dbReference>
<dbReference type="GO" id="GO:0042803">
    <property type="term" value="F:protein homodimerization activity"/>
    <property type="evidence" value="ECO:0000314"/>
    <property type="project" value="EcoCyc"/>
</dbReference>
<dbReference type="GO" id="GO:0034599">
    <property type="term" value="P:cellular response to oxidative stress"/>
    <property type="evidence" value="ECO:0000315"/>
    <property type="project" value="EcoCyc"/>
</dbReference>
<dbReference type="GO" id="GO:0006094">
    <property type="term" value="P:gluconeogenesis"/>
    <property type="evidence" value="ECO:0000318"/>
    <property type="project" value="GO_Central"/>
</dbReference>
<dbReference type="GO" id="GO:0051156">
    <property type="term" value="P:glucose 6-phosphate metabolic process"/>
    <property type="evidence" value="ECO:0000318"/>
    <property type="project" value="GO_Central"/>
</dbReference>
<dbReference type="GO" id="GO:0006096">
    <property type="term" value="P:glycolytic process"/>
    <property type="evidence" value="ECO:0000315"/>
    <property type="project" value="EcoCyc"/>
</dbReference>
<dbReference type="CDD" id="cd05015">
    <property type="entry name" value="SIS_PGI_1"/>
    <property type="match status" value="1"/>
</dbReference>
<dbReference type="CDD" id="cd05016">
    <property type="entry name" value="SIS_PGI_2"/>
    <property type="match status" value="1"/>
</dbReference>
<dbReference type="FunFam" id="1.10.1390.10:FF:000001">
    <property type="entry name" value="Glucose-6-phosphate isomerase"/>
    <property type="match status" value="1"/>
</dbReference>
<dbReference type="FunFam" id="3.40.50.10490:FF:000004">
    <property type="entry name" value="Glucose-6-phosphate isomerase"/>
    <property type="match status" value="1"/>
</dbReference>
<dbReference type="Gene3D" id="1.10.1390.10">
    <property type="match status" value="1"/>
</dbReference>
<dbReference type="Gene3D" id="3.40.50.10490">
    <property type="entry name" value="Glucose-6-phosphate isomerase like protein, domain 1"/>
    <property type="match status" value="2"/>
</dbReference>
<dbReference type="HAMAP" id="MF_00473">
    <property type="entry name" value="G6P_isomerase"/>
    <property type="match status" value="1"/>
</dbReference>
<dbReference type="InterPro" id="IPR001672">
    <property type="entry name" value="G6P_Isomerase"/>
</dbReference>
<dbReference type="InterPro" id="IPR023096">
    <property type="entry name" value="G6P_Isomerase_C"/>
</dbReference>
<dbReference type="InterPro" id="IPR018189">
    <property type="entry name" value="Phosphoglucose_isomerase_CS"/>
</dbReference>
<dbReference type="InterPro" id="IPR046348">
    <property type="entry name" value="SIS_dom_sf"/>
</dbReference>
<dbReference type="InterPro" id="IPR035476">
    <property type="entry name" value="SIS_PGI_1"/>
</dbReference>
<dbReference type="InterPro" id="IPR035482">
    <property type="entry name" value="SIS_PGI_2"/>
</dbReference>
<dbReference type="NCBIfam" id="NF001211">
    <property type="entry name" value="PRK00179.1"/>
    <property type="match status" value="1"/>
</dbReference>
<dbReference type="PANTHER" id="PTHR11469">
    <property type="entry name" value="GLUCOSE-6-PHOSPHATE ISOMERASE"/>
    <property type="match status" value="1"/>
</dbReference>
<dbReference type="PANTHER" id="PTHR11469:SF1">
    <property type="entry name" value="GLUCOSE-6-PHOSPHATE ISOMERASE"/>
    <property type="match status" value="1"/>
</dbReference>
<dbReference type="Pfam" id="PF00342">
    <property type="entry name" value="PGI"/>
    <property type="match status" value="1"/>
</dbReference>
<dbReference type="PRINTS" id="PR00662">
    <property type="entry name" value="G6PISOMERASE"/>
</dbReference>
<dbReference type="SUPFAM" id="SSF53697">
    <property type="entry name" value="SIS domain"/>
    <property type="match status" value="1"/>
</dbReference>
<dbReference type="PROSITE" id="PS00765">
    <property type="entry name" value="P_GLUCOSE_ISOMERASE_1"/>
    <property type="match status" value="1"/>
</dbReference>
<dbReference type="PROSITE" id="PS00174">
    <property type="entry name" value="P_GLUCOSE_ISOMERASE_2"/>
    <property type="match status" value="1"/>
</dbReference>
<dbReference type="PROSITE" id="PS51463">
    <property type="entry name" value="P_GLUCOSE_ISOMERASE_3"/>
    <property type="match status" value="1"/>
</dbReference>
<evidence type="ECO:0000255" key="1">
    <source>
        <dbReference type="HAMAP-Rule" id="MF_00473"/>
    </source>
</evidence>
<evidence type="ECO:0000269" key="2">
    <source>
    </source>
</evidence>
<evidence type="ECO:0000269" key="3">
    <source>
    </source>
</evidence>
<evidence type="ECO:0000269" key="4">
    <source>
    </source>
</evidence>
<evidence type="ECO:0000269" key="5">
    <source>
    </source>
</evidence>
<evidence type="ECO:0000269" key="6">
    <source>
    </source>
</evidence>
<evidence type="ECO:0000269" key="7">
    <source>
    </source>
</evidence>
<evidence type="ECO:0000305" key="8"/>
<evidence type="ECO:0007829" key="9">
    <source>
        <dbReference type="PDB" id="3NBU"/>
    </source>
</evidence>
<organism>
    <name type="scientific">Escherichia coli (strain K12)</name>
    <dbReference type="NCBI Taxonomy" id="83333"/>
    <lineage>
        <taxon>Bacteria</taxon>
        <taxon>Pseudomonadati</taxon>
        <taxon>Pseudomonadota</taxon>
        <taxon>Gammaproteobacteria</taxon>
        <taxon>Enterobacterales</taxon>
        <taxon>Enterobacteriaceae</taxon>
        <taxon>Escherichia</taxon>
    </lineage>
</organism>
<protein>
    <recommendedName>
        <fullName evidence="1">Glucose-6-phosphate isomerase</fullName>
        <shortName evidence="1">GPI</shortName>
        <ecNumber evidence="1">5.3.1.9</ecNumber>
    </recommendedName>
    <alternativeName>
        <fullName evidence="1">Phosphoglucose isomerase</fullName>
        <shortName evidence="1">PGI</shortName>
    </alternativeName>
    <alternativeName>
        <fullName evidence="1">Phosphohexose isomerase</fullName>
        <shortName evidence="1">PHI</shortName>
    </alternativeName>
</protein>
<accession>P0A6T1</accession>
<accession>P11537</accession>
<accession>Q2M6S9</accession>
<gene>
    <name evidence="1" type="primary">pgi</name>
    <name type="ordered locus">b4025</name>
    <name type="ordered locus">JW3985</name>
</gene>
<keyword id="KW-0002">3D-structure</keyword>
<keyword id="KW-0007">Acetylation</keyword>
<keyword id="KW-0963">Cytoplasm</keyword>
<keyword id="KW-0312">Gluconeogenesis</keyword>
<keyword id="KW-0324">Glycolysis</keyword>
<keyword id="KW-0413">Isomerase</keyword>
<keyword id="KW-1185">Reference proteome</keyword>
<reference key="1">
    <citation type="journal article" date="1989" name="Mol. Gen. Genet.">
        <title>Isolation and characterization of the phosphoglucose isomerase gene from Escherichia coli.</title>
        <authorList>
            <person name="Froman B.E."/>
            <person name="Tait R.C."/>
            <person name="Gottlieb L.D."/>
        </authorList>
    </citation>
    <scope>NUCLEOTIDE SEQUENCE [GENOMIC DNA]</scope>
    <source>
        <strain>K12 / JM101 / ATCC 33876 / DSM 3948 / NCIMB 11926</strain>
    </source>
</reference>
<reference key="2">
    <citation type="journal article" date="1992" name="J. Mol. Evol.">
        <title>Anomalous phylogeny involving the enzyme glucose-6-phosphate isomerase.</title>
        <authorList>
            <person name="Smith M.W."/>
            <person name="Doolittle R.F."/>
        </authorList>
    </citation>
    <scope>NUCLEOTIDE SEQUENCE [GENOMIC DNA]</scope>
    <scope>PHYLOGENETIC STUDY</scope>
    <source>
        <strain>XL1 Blue 2</strain>
    </source>
</reference>
<reference key="3">
    <citation type="journal article" date="1993" name="Nucleic Acids Res.">
        <title>Analysis of the Escherichia coli genome. IV. DNA sequence of the region from 89.2 to 92.8 minutes.</title>
        <authorList>
            <person name="Blattner F.R."/>
            <person name="Burland V.D."/>
            <person name="Plunkett G. III"/>
            <person name="Sofia H.J."/>
            <person name="Daniels D.L."/>
        </authorList>
    </citation>
    <scope>NUCLEOTIDE SEQUENCE [LARGE SCALE GENOMIC DNA]</scope>
    <source>
        <strain>K12 / MG1655 / ATCC 47076</strain>
    </source>
</reference>
<reference key="4">
    <citation type="journal article" date="1997" name="Science">
        <title>The complete genome sequence of Escherichia coli K-12.</title>
        <authorList>
            <person name="Blattner F.R."/>
            <person name="Plunkett G. III"/>
            <person name="Bloch C.A."/>
            <person name="Perna N.T."/>
            <person name="Burland V."/>
            <person name="Riley M."/>
            <person name="Collado-Vides J."/>
            <person name="Glasner J.D."/>
            <person name="Rode C.K."/>
            <person name="Mayhew G.F."/>
            <person name="Gregor J."/>
            <person name="Davis N.W."/>
            <person name="Kirkpatrick H.A."/>
            <person name="Goeden M.A."/>
            <person name="Rose D.J."/>
            <person name="Mau B."/>
            <person name="Shao Y."/>
        </authorList>
    </citation>
    <scope>NUCLEOTIDE SEQUENCE [LARGE SCALE GENOMIC DNA]</scope>
    <source>
        <strain>K12 / MG1655 / ATCC 47076</strain>
    </source>
</reference>
<reference key="5">
    <citation type="journal article" date="2006" name="Mol. Syst. Biol.">
        <title>Highly accurate genome sequences of Escherichia coli K-12 strains MG1655 and W3110.</title>
        <authorList>
            <person name="Hayashi K."/>
            <person name="Morooka N."/>
            <person name="Yamamoto Y."/>
            <person name="Fujita K."/>
            <person name="Isono K."/>
            <person name="Choi S."/>
            <person name="Ohtsubo E."/>
            <person name="Baba T."/>
            <person name="Wanner B.L."/>
            <person name="Mori H."/>
            <person name="Horiuchi T."/>
        </authorList>
    </citation>
    <scope>NUCLEOTIDE SEQUENCE [LARGE SCALE GENOMIC DNA]</scope>
    <source>
        <strain>K12 / W3110 / ATCC 27325 / DSM 5911</strain>
    </source>
</reference>
<reference key="6">
    <citation type="journal article" date="1972" name="J. Bacteriol.">
        <title>Localization of phosphoglucose isomerase in Escherichia coli and its relation to the induction of the hexose phosphate transport system.</title>
        <authorList>
            <person name="Friedberg I."/>
        </authorList>
    </citation>
    <scope>SUBCELLULAR LOCATION</scope>
    <scope>ACTIVITY REGULATION</scope>
</reference>
<reference key="7">
    <citation type="journal article" date="2009" name="Mol. Cell. Proteomics">
        <title>Lysine acetylation is a highly abundant and evolutionarily conserved modification in Escherichia coli.</title>
        <authorList>
            <person name="Zhang J."/>
            <person name="Sprung R."/>
            <person name="Pei J."/>
            <person name="Tan X."/>
            <person name="Kim S."/>
            <person name="Zhu H."/>
            <person name="Liu C.F."/>
            <person name="Grishin N.V."/>
            <person name="Zhao Y."/>
        </authorList>
    </citation>
    <scope>ACETYLATION [LARGE SCALE ANALYSIS] AT LYS-80; LYS-228 AND LYS-234</scope>
    <scope>IDENTIFICATION BY MASS SPECTROMETRY</scope>
    <source>
        <strain>K12 / JW1106</strain>
        <strain>K12 / MG1655 / ATCC 47076</strain>
    </source>
</reference>
<reference key="8">
    <citation type="journal article" date="1995" name="J. Biol. Chem.">
        <title>Pleiotropic regulation of central carbohydrate metabolism in Escherichia coli via the gene csrA.</title>
        <authorList>
            <person name="Sabnis N.A."/>
            <person name="Yang H."/>
            <person name="Romeo T."/>
        </authorList>
    </citation>
    <scope>ACTIVITY REGULATION</scope>
</reference>
<reference key="9">
    <citation type="journal article" date="2003" name="J. Biotechnol.">
        <title>Gene expression patterns for metabolic pathway in pgi knockout Escherichia coli with and without phb genes based on RT-PCR.</title>
        <authorList>
            <person name="Kabir M.M."/>
            <person name="Shimizu K."/>
        </authorList>
    </citation>
    <scope>DISRUPTION PHENOTYPE</scope>
</reference>
<reference key="10">
    <citation type="journal article" date="2008" name="Arch. Microbiol.">
        <title>Activation of glucose transport under oxidative stress in Escherichia coli.</title>
        <authorList>
            <person name="Rungrassamee W."/>
            <person name="Liu X."/>
            <person name="Pomposiello P.J."/>
        </authorList>
    </citation>
    <scope>DISRUPTION PHENOTYPE</scope>
    <scope>INDUCTION</scope>
</reference>
<reference key="11">
    <citation type="journal article" date="2012" name="PLoS ONE">
        <title>Macro-to-micro structural proteomics: native source proteins for high-throughput crystallization.</title>
        <authorList>
            <person name="Totir M."/>
            <person name="Echols N."/>
            <person name="Nanao M."/>
            <person name="Gee C.L."/>
            <person name="Moskaleva A."/>
            <person name="Gradia S."/>
            <person name="Iavarone A.T."/>
            <person name="Berger J.M."/>
            <person name="May A.P."/>
            <person name="Zubieta C."/>
            <person name="Alber T."/>
        </authorList>
    </citation>
    <scope>X-RAY CRYSTALLOGRAPHY (2.05 ANGSTROMS)</scope>
    <scope>SUBUNIT</scope>
</reference>
<proteinExistence type="evidence at protein level"/>
<name>G6PI_ECOLI</name>
<sequence length="549" mass="61530">MKNINPTQTAAWQALQKHFDEMKDVTIADLFAKDGDRFSKFSATFDDQMLVDYSKNRITEETLAKLQDLAKECDLAGAIKSMFSGEKINRTENRAVLHVALRNRSNTPILVDGKDVMPEVNAVLEKMKTFSEAIISGEWKGYTGKAITDVVNIGIGGSDLGPYMVTEALRPYKNHLNMHFVSNVDGTHIAEVLKKVNPETTLFLVASKTFTTQETMTNAHSARDWFLKAAGDEKHVAKHFAALSTNAKAVGEFGIDTANMFEFWDWVGGRYSLWSAIGLSIVLSIGFDNFVELLSGAHAMDKHFSTTPAEKNLPVLLALIGIWYNNFFGAETEAILPYDQYMHRFAAYFQQGNMESNGKYVDRNGNVVDYQTGPIIWGEPGTNGQHAFYQLIHQGTKMVPCDFIAPAITHNPLSDHHQKLLSNFFAQTEALAFGKSREVVEQEYRDQGKDPATLDYVVPFKVFEGNRPTNSILLREITPFSLGALIALYEHKIFTQGVILNIFTFDQWGVELGKQLANRILPELKDDKEISSHDSSTNGLINRYKAWRG</sequence>
<comment type="function">
    <text evidence="1">Catalyzes the reversible isomerization of glucose-6-phosphate to fructose-6-phosphate.</text>
</comment>
<comment type="catalytic activity">
    <reaction evidence="1">
        <text>alpha-D-glucose 6-phosphate = beta-D-fructose 6-phosphate</text>
        <dbReference type="Rhea" id="RHEA:11816"/>
        <dbReference type="ChEBI" id="CHEBI:57634"/>
        <dbReference type="ChEBI" id="CHEBI:58225"/>
        <dbReference type="EC" id="5.3.1.9"/>
    </reaction>
</comment>
<comment type="activity regulation">
    <text evidence="6 7">Inhibited by sorbitol-6-phosphate (S6P) and activated by CsrA.</text>
</comment>
<comment type="pathway">
    <text evidence="1">Carbohydrate biosynthesis; gluconeogenesis.</text>
</comment>
<comment type="pathway">
    <text evidence="1">Carbohydrate degradation; glycolysis; D-glyceraldehyde 3-phosphate and glycerone phosphate from D-glucose: step 2/4.</text>
</comment>
<comment type="subunit">
    <text evidence="5">Homodimer.</text>
</comment>
<comment type="interaction">
    <interactant intactId="EBI-909327">
        <id>P0A6T1</id>
    </interactant>
    <interactant intactId="EBI-909327">
        <id>P0A6T1</id>
        <label>pgi</label>
    </interactant>
    <organismsDiffer>false</organismsDiffer>
    <experiments>3</experiments>
</comment>
<comment type="subcellular location">
    <subcellularLocation>
        <location evidence="1 6">Cytoplasm</location>
    </subcellularLocation>
</comment>
<comment type="induction">
    <text evidence="3">Induced by oxidative stress.</text>
</comment>
<comment type="disruption phenotype">
    <text evidence="2 3">One of the main features of pgi mutant is the overproduction of NADPH produced in pentose phosphate (PP) pathway which causes some reducing power imbalance that ultimately affects the cell growth. Cells lacking this gene grow slowly on glucose and utilize glucose primarily via the pentose phosphate pathway as the source of NADPH. They are also hypersensitive to oxidative stress induced by paraquat.</text>
</comment>
<comment type="similarity">
    <text evidence="1 8">Belongs to the GPI family.</text>
</comment>